<reference key="1">
    <citation type="journal article" date="2002" name="Proc. Natl. Acad. Sci. U.S.A.">
        <title>Genome sequence of a serotype M3 strain of group A Streptococcus: phage-encoded toxins, the high-virulence phenotype, and clone emergence.</title>
        <authorList>
            <person name="Beres S.B."/>
            <person name="Sylva G.L."/>
            <person name="Barbian K.D."/>
            <person name="Lei B."/>
            <person name="Hoff J.S."/>
            <person name="Mammarella N.D."/>
            <person name="Liu M.-Y."/>
            <person name="Smoot J.C."/>
            <person name="Porcella S.F."/>
            <person name="Parkins L.D."/>
            <person name="Campbell D.S."/>
            <person name="Smith T.M."/>
            <person name="McCormick J.K."/>
            <person name="Leung D.Y.M."/>
            <person name="Schlievert P.M."/>
            <person name="Musser J.M."/>
        </authorList>
    </citation>
    <scope>NUCLEOTIDE SEQUENCE [LARGE SCALE GENOMIC DNA]</scope>
    <source>
        <strain>ATCC BAA-595 / MGAS315</strain>
    </source>
</reference>
<accession>P0CZ94</accession>
<accession>Q878H3</accession>
<accession>Q8K828</accession>
<dbReference type="EMBL" id="AE014074">
    <property type="protein sequence ID" value="AAM79103.1"/>
    <property type="molecule type" value="Genomic_DNA"/>
</dbReference>
<dbReference type="RefSeq" id="WP_011054330.1">
    <property type="nucleotide sequence ID" value="NC_004070.1"/>
</dbReference>
<dbReference type="SMR" id="P0CZ94"/>
<dbReference type="KEGG" id="spg:SpyM3_0496"/>
<dbReference type="HOGENOM" id="CLU_085114_1_2_9"/>
<dbReference type="Proteomes" id="UP000000564">
    <property type="component" value="Chromosome"/>
</dbReference>
<dbReference type="GO" id="GO:0005886">
    <property type="term" value="C:plasma membrane"/>
    <property type="evidence" value="ECO:0007669"/>
    <property type="project" value="UniProtKB-SubCell"/>
</dbReference>
<dbReference type="GO" id="GO:0045259">
    <property type="term" value="C:proton-transporting ATP synthase complex"/>
    <property type="evidence" value="ECO:0007669"/>
    <property type="project" value="UniProtKB-KW"/>
</dbReference>
<dbReference type="GO" id="GO:0046933">
    <property type="term" value="F:proton-transporting ATP synthase activity, rotational mechanism"/>
    <property type="evidence" value="ECO:0007669"/>
    <property type="project" value="UniProtKB-UniRule"/>
</dbReference>
<dbReference type="Gene3D" id="1.10.520.20">
    <property type="entry name" value="N-terminal domain of the delta subunit of the F1F0-ATP synthase"/>
    <property type="match status" value="1"/>
</dbReference>
<dbReference type="HAMAP" id="MF_01416">
    <property type="entry name" value="ATP_synth_delta_bact"/>
    <property type="match status" value="1"/>
</dbReference>
<dbReference type="InterPro" id="IPR026015">
    <property type="entry name" value="ATP_synth_OSCP/delta_N_sf"/>
</dbReference>
<dbReference type="InterPro" id="IPR000711">
    <property type="entry name" value="ATPase_OSCP/dsu"/>
</dbReference>
<dbReference type="NCBIfam" id="TIGR01145">
    <property type="entry name" value="ATP_synt_delta"/>
    <property type="match status" value="1"/>
</dbReference>
<dbReference type="NCBIfam" id="NF004401">
    <property type="entry name" value="PRK05758.2-1"/>
    <property type="match status" value="1"/>
</dbReference>
<dbReference type="PANTHER" id="PTHR11910">
    <property type="entry name" value="ATP SYNTHASE DELTA CHAIN"/>
    <property type="match status" value="1"/>
</dbReference>
<dbReference type="Pfam" id="PF00213">
    <property type="entry name" value="OSCP"/>
    <property type="match status" value="1"/>
</dbReference>
<dbReference type="PRINTS" id="PR00125">
    <property type="entry name" value="ATPASEDELTA"/>
</dbReference>
<dbReference type="SUPFAM" id="SSF47928">
    <property type="entry name" value="N-terminal domain of the delta subunit of the F1F0-ATP synthase"/>
    <property type="match status" value="1"/>
</dbReference>
<evidence type="ECO:0000255" key="1">
    <source>
        <dbReference type="HAMAP-Rule" id="MF_01416"/>
    </source>
</evidence>
<name>ATPD_STRP3</name>
<organism>
    <name type="scientific">Streptococcus pyogenes serotype M3 (strain ATCC BAA-595 / MGAS315)</name>
    <dbReference type="NCBI Taxonomy" id="198466"/>
    <lineage>
        <taxon>Bacteria</taxon>
        <taxon>Bacillati</taxon>
        <taxon>Bacillota</taxon>
        <taxon>Bacilli</taxon>
        <taxon>Lactobacillales</taxon>
        <taxon>Streptococcaceae</taxon>
        <taxon>Streptococcus</taxon>
    </lineage>
</organism>
<comment type="function">
    <text evidence="1">F(1)F(0) ATP synthase produces ATP from ADP in the presence of a proton or sodium gradient. F-type ATPases consist of two structural domains, F(1) containing the extramembraneous catalytic core and F(0) containing the membrane proton channel, linked together by a central stalk and a peripheral stalk. During catalysis, ATP synthesis in the catalytic domain of F(1) is coupled via a rotary mechanism of the central stalk subunits to proton translocation.</text>
</comment>
<comment type="function">
    <text evidence="1">This protein is part of the stalk that links CF(0) to CF(1). It either transmits conformational changes from CF(0) to CF(1) or is implicated in proton conduction.</text>
</comment>
<comment type="subunit">
    <text evidence="1">F-type ATPases have 2 components, F(1) - the catalytic core - and F(0) - the membrane proton channel. F(1) has five subunits: alpha(3), beta(3), gamma(1), delta(1), epsilon(1). F(0) has three main subunits: a(1), b(2) and c(10-14). The alpha and beta chains form an alternating ring which encloses part of the gamma chain. F(1) is attached to F(0) by a central stalk formed by the gamma and epsilon chains, while a peripheral stalk is formed by the delta and b chains.</text>
</comment>
<comment type="subcellular location">
    <subcellularLocation>
        <location evidence="1">Cell membrane</location>
        <topology evidence="1">Peripheral membrane protein</topology>
    </subcellularLocation>
</comment>
<comment type="similarity">
    <text evidence="1">Belongs to the ATPase delta chain family.</text>
</comment>
<sequence>MTKKEQALIEQYGKSLVEVASEHHSLDTLQADVLAILETFETTNLDQSLSSLAVPHAEKIKLLTLLKGNNSVYMNNFLNLILQNEREAYLYQMLQAVLNEIAIVSNQYDVTVTSSLPLTEEQKSRVRAVVAKKFAVTAGRLIEKVDPSLIGGFIISVNNKVIDTSIRRQLQAFKMNLK</sequence>
<proteinExistence type="inferred from homology"/>
<feature type="chain" id="PRO_0000371162" description="ATP synthase subunit delta">
    <location>
        <begin position="1"/>
        <end position="178"/>
    </location>
</feature>
<protein>
    <recommendedName>
        <fullName evidence="1">ATP synthase subunit delta</fullName>
    </recommendedName>
    <alternativeName>
        <fullName evidence="1">ATP synthase F(1) sector subunit delta</fullName>
    </alternativeName>
    <alternativeName>
        <fullName evidence="1">F-type ATPase subunit delta</fullName>
        <shortName evidence="1">F-ATPase subunit delta</shortName>
    </alternativeName>
</protein>
<gene>
    <name evidence="1" type="primary">atpH</name>
    <name type="ordered locus">SpyM3_0496</name>
</gene>
<keyword id="KW-0066">ATP synthesis</keyword>
<keyword id="KW-1003">Cell membrane</keyword>
<keyword id="KW-0139">CF(1)</keyword>
<keyword id="KW-0375">Hydrogen ion transport</keyword>
<keyword id="KW-0406">Ion transport</keyword>
<keyword id="KW-0472">Membrane</keyword>
<keyword id="KW-0813">Transport</keyword>